<accession>B8GV59</accession>
<organism>
    <name type="scientific">Thioalkalivibrio sulfidiphilus (strain HL-EbGR7)</name>
    <dbReference type="NCBI Taxonomy" id="396588"/>
    <lineage>
        <taxon>Bacteria</taxon>
        <taxon>Pseudomonadati</taxon>
        <taxon>Pseudomonadota</taxon>
        <taxon>Gammaproteobacteria</taxon>
        <taxon>Chromatiales</taxon>
        <taxon>Ectothiorhodospiraceae</taxon>
        <taxon>Thioalkalivibrio</taxon>
    </lineage>
</organism>
<reference key="1">
    <citation type="journal article" date="2011" name="Stand. Genomic Sci.">
        <title>Complete genome sequence of 'Thioalkalivibrio sulfidophilus' HL-EbGr7.</title>
        <authorList>
            <person name="Muyzer G."/>
            <person name="Sorokin D.Y."/>
            <person name="Mavromatis K."/>
            <person name="Lapidus A."/>
            <person name="Clum A."/>
            <person name="Ivanova N."/>
            <person name="Pati A."/>
            <person name="d'Haeseleer P."/>
            <person name="Woyke T."/>
            <person name="Kyrpides N.C."/>
        </authorList>
    </citation>
    <scope>NUCLEOTIDE SEQUENCE [LARGE SCALE GENOMIC DNA]</scope>
    <source>
        <strain>HL-EbGR7</strain>
    </source>
</reference>
<proteinExistence type="inferred from homology"/>
<keyword id="KW-1185">Reference proteome</keyword>
<keyword id="KW-0687">Ribonucleoprotein</keyword>
<keyword id="KW-0689">Ribosomal protein</keyword>
<comment type="function">
    <text evidence="1">Involved in the binding of tRNA to the ribosomes.</text>
</comment>
<comment type="subunit">
    <text evidence="1">Part of the 30S ribosomal subunit.</text>
</comment>
<comment type="similarity">
    <text evidence="1">Belongs to the universal ribosomal protein uS10 family.</text>
</comment>
<evidence type="ECO:0000255" key="1">
    <source>
        <dbReference type="HAMAP-Rule" id="MF_00508"/>
    </source>
</evidence>
<evidence type="ECO:0000305" key="2"/>
<name>RS10_THISH</name>
<gene>
    <name evidence="1" type="primary">rpsJ</name>
    <name type="ordered locus">Tgr7_2325</name>
</gene>
<protein>
    <recommendedName>
        <fullName evidence="1">Small ribosomal subunit protein uS10</fullName>
    </recommendedName>
    <alternativeName>
        <fullName evidence="2">30S ribosomal protein S10</fullName>
    </alternativeName>
</protein>
<feature type="chain" id="PRO_1000146086" description="Small ribosomal subunit protein uS10">
    <location>
        <begin position="1"/>
        <end position="103"/>
    </location>
</feature>
<dbReference type="EMBL" id="CP001339">
    <property type="protein sequence ID" value="ACL73405.1"/>
    <property type="molecule type" value="Genomic_DNA"/>
</dbReference>
<dbReference type="RefSeq" id="WP_012638881.1">
    <property type="nucleotide sequence ID" value="NC_011901.1"/>
</dbReference>
<dbReference type="SMR" id="B8GV59"/>
<dbReference type="STRING" id="396588.Tgr7_2325"/>
<dbReference type="KEGG" id="tgr:Tgr7_2325"/>
<dbReference type="eggNOG" id="COG0051">
    <property type="taxonomic scope" value="Bacteria"/>
</dbReference>
<dbReference type="HOGENOM" id="CLU_122625_1_3_6"/>
<dbReference type="OrthoDB" id="9804464at2"/>
<dbReference type="Proteomes" id="UP000002383">
    <property type="component" value="Chromosome"/>
</dbReference>
<dbReference type="GO" id="GO:1990904">
    <property type="term" value="C:ribonucleoprotein complex"/>
    <property type="evidence" value="ECO:0007669"/>
    <property type="project" value="UniProtKB-KW"/>
</dbReference>
<dbReference type="GO" id="GO:0005840">
    <property type="term" value="C:ribosome"/>
    <property type="evidence" value="ECO:0007669"/>
    <property type="project" value="UniProtKB-KW"/>
</dbReference>
<dbReference type="GO" id="GO:0003735">
    <property type="term" value="F:structural constituent of ribosome"/>
    <property type="evidence" value="ECO:0007669"/>
    <property type="project" value="InterPro"/>
</dbReference>
<dbReference type="GO" id="GO:0000049">
    <property type="term" value="F:tRNA binding"/>
    <property type="evidence" value="ECO:0007669"/>
    <property type="project" value="UniProtKB-UniRule"/>
</dbReference>
<dbReference type="GO" id="GO:0006412">
    <property type="term" value="P:translation"/>
    <property type="evidence" value="ECO:0007669"/>
    <property type="project" value="UniProtKB-UniRule"/>
</dbReference>
<dbReference type="FunFam" id="3.30.70.600:FF:000001">
    <property type="entry name" value="30S ribosomal protein S10"/>
    <property type="match status" value="1"/>
</dbReference>
<dbReference type="Gene3D" id="3.30.70.600">
    <property type="entry name" value="Ribosomal protein S10 domain"/>
    <property type="match status" value="1"/>
</dbReference>
<dbReference type="HAMAP" id="MF_00508">
    <property type="entry name" value="Ribosomal_uS10"/>
    <property type="match status" value="1"/>
</dbReference>
<dbReference type="InterPro" id="IPR001848">
    <property type="entry name" value="Ribosomal_uS10"/>
</dbReference>
<dbReference type="InterPro" id="IPR018268">
    <property type="entry name" value="Ribosomal_uS10_CS"/>
</dbReference>
<dbReference type="InterPro" id="IPR027486">
    <property type="entry name" value="Ribosomal_uS10_dom"/>
</dbReference>
<dbReference type="InterPro" id="IPR036838">
    <property type="entry name" value="Ribosomal_uS10_dom_sf"/>
</dbReference>
<dbReference type="NCBIfam" id="NF001861">
    <property type="entry name" value="PRK00596.1"/>
    <property type="match status" value="1"/>
</dbReference>
<dbReference type="NCBIfam" id="TIGR01049">
    <property type="entry name" value="rpsJ_bact"/>
    <property type="match status" value="1"/>
</dbReference>
<dbReference type="PANTHER" id="PTHR11700">
    <property type="entry name" value="30S RIBOSOMAL PROTEIN S10 FAMILY MEMBER"/>
    <property type="match status" value="1"/>
</dbReference>
<dbReference type="Pfam" id="PF00338">
    <property type="entry name" value="Ribosomal_S10"/>
    <property type="match status" value="1"/>
</dbReference>
<dbReference type="PRINTS" id="PR00971">
    <property type="entry name" value="RIBOSOMALS10"/>
</dbReference>
<dbReference type="SMART" id="SM01403">
    <property type="entry name" value="Ribosomal_S10"/>
    <property type="match status" value="1"/>
</dbReference>
<dbReference type="SUPFAM" id="SSF54999">
    <property type="entry name" value="Ribosomal protein S10"/>
    <property type="match status" value="1"/>
</dbReference>
<dbReference type="PROSITE" id="PS00361">
    <property type="entry name" value="RIBOSOMAL_S10"/>
    <property type="match status" value="1"/>
</dbReference>
<sequence length="103" mass="11835">MSKQRIRIRLKAFDHRLIDRSASEIVETAKRTGARVKGPIPLPTKMERFTVLISPHVNKDARDQYEIRTHKRLMDIMDPTDKTVDALMKLDLAAGVDVQIKLN</sequence>